<protein>
    <recommendedName>
        <fullName evidence="1">Methionine--tRNA ligase</fullName>
        <ecNumber evidence="1">6.1.1.10</ecNumber>
    </recommendedName>
    <alternativeName>
        <fullName evidence="1">Methionyl-tRNA synthetase</fullName>
        <shortName evidence="1">MetRS</shortName>
    </alternativeName>
</protein>
<accession>A1TZ66</accession>
<feature type="chain" id="PRO_0000331849" description="Methionine--tRNA ligase">
    <location>
        <begin position="1"/>
        <end position="678"/>
    </location>
</feature>
<feature type="domain" description="tRNA-binding" evidence="1">
    <location>
        <begin position="577"/>
        <end position="678"/>
    </location>
</feature>
<feature type="short sequence motif" description="'HIGH' region">
    <location>
        <begin position="18"/>
        <end position="28"/>
    </location>
</feature>
<feature type="short sequence motif" description="'KMSKS' region">
    <location>
        <begin position="334"/>
        <end position="338"/>
    </location>
</feature>
<feature type="binding site" evidence="1">
    <location>
        <position position="149"/>
    </location>
    <ligand>
        <name>Zn(2+)</name>
        <dbReference type="ChEBI" id="CHEBI:29105"/>
    </ligand>
</feature>
<feature type="binding site" evidence="1">
    <location>
        <position position="152"/>
    </location>
    <ligand>
        <name>Zn(2+)</name>
        <dbReference type="ChEBI" id="CHEBI:29105"/>
    </ligand>
</feature>
<feature type="binding site" evidence="1">
    <location>
        <position position="162"/>
    </location>
    <ligand>
        <name>Zn(2+)</name>
        <dbReference type="ChEBI" id="CHEBI:29105"/>
    </ligand>
</feature>
<feature type="binding site" evidence="1">
    <location>
        <position position="165"/>
    </location>
    <ligand>
        <name>Zn(2+)</name>
        <dbReference type="ChEBI" id="CHEBI:29105"/>
    </ligand>
</feature>
<feature type="binding site" evidence="1">
    <location>
        <position position="337"/>
    </location>
    <ligand>
        <name>ATP</name>
        <dbReference type="ChEBI" id="CHEBI:30616"/>
    </ligand>
</feature>
<organism>
    <name type="scientific">Marinobacter nauticus (strain ATCC 700491 / DSM 11845 / VT8)</name>
    <name type="common">Marinobacter aquaeolei</name>
    <dbReference type="NCBI Taxonomy" id="351348"/>
    <lineage>
        <taxon>Bacteria</taxon>
        <taxon>Pseudomonadati</taxon>
        <taxon>Pseudomonadota</taxon>
        <taxon>Gammaproteobacteria</taxon>
        <taxon>Pseudomonadales</taxon>
        <taxon>Marinobacteraceae</taxon>
        <taxon>Marinobacter</taxon>
    </lineage>
</organism>
<name>SYM_MARN8</name>
<proteinExistence type="inferred from homology"/>
<reference key="1">
    <citation type="journal article" date="2011" name="Appl. Environ. Microbiol.">
        <title>Genomic potential of Marinobacter aquaeolei, a biogeochemical 'opportunitroph'.</title>
        <authorList>
            <person name="Singer E."/>
            <person name="Webb E.A."/>
            <person name="Nelson W.C."/>
            <person name="Heidelberg J.F."/>
            <person name="Ivanova N."/>
            <person name="Pati A."/>
            <person name="Edwards K.J."/>
        </authorList>
    </citation>
    <scope>NUCLEOTIDE SEQUENCE [LARGE SCALE GENOMIC DNA]</scope>
    <source>
        <strain>ATCC 700491 / DSM 11845 / VT8</strain>
    </source>
</reference>
<sequence>MTQASKQQRDILVTSALPYANGPIHLGHLLEYIQTDIWVRFQNMRGHNCYYVCADDAHGTAIMLRAEREGITPEQLIDRIRQEHQEDFAGFHIRFDNYYSTHSEENQYFSEYIYRQLKDNDHIATRKITQFFDPEKEMFLADRFIKGTCPKCKTEDQYGDNCEACGATYTPAELINPRSAVSGATPVEKESEHYFFKLPEFHDFLSKWTRSGALQPQVANKLAEWLDAGLQEWDISRDAPYFGFEIPDAPGKYFYVWLDAPIGYLASFKNLCNREGIDFEHFWKKDSSAEVYHFIGKDIINFHALFWPSMLHDAGFRTPTAVWAHGFVTVNGKKMSKSRGTFIMARTYLDHLDPEYLRYYFAAKLTGGVDDMDLNLDDFAARVNSDLVGKVVNIASRSAGFITKRFDGKLGKVTEQDKLKEFIDAGEQIAEFYEAREFGRAMRRIMELADIANQYVNDEQPWVIAKQEGQDDKLQAICTNALNMFRLLMTYLAPVLPKTADAAQSFLNSRLDWNNRAALLENHGIDKFKPLMNRVDMAQIEKMLDASKEEMPAAVGQPSAAPTADLEPVAEEIEFPDFAKVDLRVAKIVKAEHVEGADKLLRLTLDIGHGERNVFAGIKSAYKPEDLEGRMTVMVANLKPRKMKFGMSEGMVLAAGPGGKEIFILSPDSGATPGMRVM</sequence>
<dbReference type="EC" id="6.1.1.10" evidence="1"/>
<dbReference type="EMBL" id="CP000514">
    <property type="protein sequence ID" value="ABM18035.1"/>
    <property type="molecule type" value="Genomic_DNA"/>
</dbReference>
<dbReference type="RefSeq" id="WP_011784455.1">
    <property type="nucleotide sequence ID" value="NC_008740.1"/>
</dbReference>
<dbReference type="SMR" id="A1TZ66"/>
<dbReference type="STRING" id="351348.Maqu_0939"/>
<dbReference type="KEGG" id="maq:Maqu_0939"/>
<dbReference type="eggNOG" id="COG0073">
    <property type="taxonomic scope" value="Bacteria"/>
</dbReference>
<dbReference type="eggNOG" id="COG0143">
    <property type="taxonomic scope" value="Bacteria"/>
</dbReference>
<dbReference type="HOGENOM" id="CLU_009710_7_0_6"/>
<dbReference type="OrthoDB" id="9810191at2"/>
<dbReference type="Proteomes" id="UP000000998">
    <property type="component" value="Chromosome"/>
</dbReference>
<dbReference type="GO" id="GO:0005829">
    <property type="term" value="C:cytosol"/>
    <property type="evidence" value="ECO:0007669"/>
    <property type="project" value="TreeGrafter"/>
</dbReference>
<dbReference type="GO" id="GO:0005524">
    <property type="term" value="F:ATP binding"/>
    <property type="evidence" value="ECO:0007669"/>
    <property type="project" value="UniProtKB-UniRule"/>
</dbReference>
<dbReference type="GO" id="GO:0046872">
    <property type="term" value="F:metal ion binding"/>
    <property type="evidence" value="ECO:0007669"/>
    <property type="project" value="UniProtKB-KW"/>
</dbReference>
<dbReference type="GO" id="GO:0004825">
    <property type="term" value="F:methionine-tRNA ligase activity"/>
    <property type="evidence" value="ECO:0007669"/>
    <property type="project" value="UniProtKB-UniRule"/>
</dbReference>
<dbReference type="GO" id="GO:0000049">
    <property type="term" value="F:tRNA binding"/>
    <property type="evidence" value="ECO:0007669"/>
    <property type="project" value="UniProtKB-KW"/>
</dbReference>
<dbReference type="GO" id="GO:0006431">
    <property type="term" value="P:methionyl-tRNA aminoacylation"/>
    <property type="evidence" value="ECO:0007669"/>
    <property type="project" value="UniProtKB-UniRule"/>
</dbReference>
<dbReference type="CDD" id="cd07957">
    <property type="entry name" value="Anticodon_Ia_Met"/>
    <property type="match status" value="1"/>
</dbReference>
<dbReference type="CDD" id="cd00814">
    <property type="entry name" value="MetRS_core"/>
    <property type="match status" value="1"/>
</dbReference>
<dbReference type="CDD" id="cd02800">
    <property type="entry name" value="tRNA_bind_EcMetRS_like"/>
    <property type="match status" value="1"/>
</dbReference>
<dbReference type="FunFam" id="1.10.730.10:FF:000005">
    <property type="entry name" value="Methionine--tRNA ligase"/>
    <property type="match status" value="1"/>
</dbReference>
<dbReference type="FunFam" id="2.20.28.20:FF:000001">
    <property type="entry name" value="Methionine--tRNA ligase"/>
    <property type="match status" value="1"/>
</dbReference>
<dbReference type="FunFam" id="2.40.50.140:FF:000042">
    <property type="entry name" value="Methionine--tRNA ligase"/>
    <property type="match status" value="1"/>
</dbReference>
<dbReference type="Gene3D" id="3.40.50.620">
    <property type="entry name" value="HUPs"/>
    <property type="match status" value="1"/>
</dbReference>
<dbReference type="Gene3D" id="1.10.730.10">
    <property type="entry name" value="Isoleucyl-tRNA Synthetase, Domain 1"/>
    <property type="match status" value="1"/>
</dbReference>
<dbReference type="Gene3D" id="2.20.28.20">
    <property type="entry name" value="Methionyl-tRNA synthetase, Zn-domain"/>
    <property type="match status" value="1"/>
</dbReference>
<dbReference type="Gene3D" id="2.40.50.140">
    <property type="entry name" value="Nucleic acid-binding proteins"/>
    <property type="match status" value="1"/>
</dbReference>
<dbReference type="HAMAP" id="MF_00098">
    <property type="entry name" value="Met_tRNA_synth_type1"/>
    <property type="match status" value="1"/>
</dbReference>
<dbReference type="InterPro" id="IPR001412">
    <property type="entry name" value="aa-tRNA-synth_I_CS"/>
</dbReference>
<dbReference type="InterPro" id="IPR041872">
    <property type="entry name" value="Anticodon_Met"/>
</dbReference>
<dbReference type="InterPro" id="IPR004495">
    <property type="entry name" value="Met-tRNA-synth_bsu_C"/>
</dbReference>
<dbReference type="InterPro" id="IPR023458">
    <property type="entry name" value="Met-tRNA_ligase_1"/>
</dbReference>
<dbReference type="InterPro" id="IPR014758">
    <property type="entry name" value="Met-tRNA_synth"/>
</dbReference>
<dbReference type="InterPro" id="IPR015413">
    <property type="entry name" value="Methionyl/Leucyl_tRNA_Synth"/>
</dbReference>
<dbReference type="InterPro" id="IPR033911">
    <property type="entry name" value="MetRS_core"/>
</dbReference>
<dbReference type="InterPro" id="IPR029038">
    <property type="entry name" value="MetRS_Zn"/>
</dbReference>
<dbReference type="InterPro" id="IPR012340">
    <property type="entry name" value="NA-bd_OB-fold"/>
</dbReference>
<dbReference type="InterPro" id="IPR014729">
    <property type="entry name" value="Rossmann-like_a/b/a_fold"/>
</dbReference>
<dbReference type="InterPro" id="IPR002547">
    <property type="entry name" value="tRNA-bd_dom"/>
</dbReference>
<dbReference type="InterPro" id="IPR009080">
    <property type="entry name" value="tRNAsynth_Ia_anticodon-bd"/>
</dbReference>
<dbReference type="NCBIfam" id="TIGR00398">
    <property type="entry name" value="metG"/>
    <property type="match status" value="1"/>
</dbReference>
<dbReference type="NCBIfam" id="TIGR00399">
    <property type="entry name" value="metG_C_term"/>
    <property type="match status" value="1"/>
</dbReference>
<dbReference type="NCBIfam" id="NF001100">
    <property type="entry name" value="PRK00133.1"/>
    <property type="match status" value="1"/>
</dbReference>
<dbReference type="PANTHER" id="PTHR45765">
    <property type="entry name" value="METHIONINE--TRNA LIGASE"/>
    <property type="match status" value="1"/>
</dbReference>
<dbReference type="PANTHER" id="PTHR45765:SF1">
    <property type="entry name" value="METHIONINE--TRNA LIGASE, CYTOPLASMIC"/>
    <property type="match status" value="1"/>
</dbReference>
<dbReference type="Pfam" id="PF19303">
    <property type="entry name" value="Anticodon_3"/>
    <property type="match status" value="1"/>
</dbReference>
<dbReference type="Pfam" id="PF09334">
    <property type="entry name" value="tRNA-synt_1g"/>
    <property type="match status" value="1"/>
</dbReference>
<dbReference type="Pfam" id="PF01588">
    <property type="entry name" value="tRNA_bind"/>
    <property type="match status" value="1"/>
</dbReference>
<dbReference type="PRINTS" id="PR01041">
    <property type="entry name" value="TRNASYNTHMET"/>
</dbReference>
<dbReference type="SUPFAM" id="SSF47323">
    <property type="entry name" value="Anticodon-binding domain of a subclass of class I aminoacyl-tRNA synthetases"/>
    <property type="match status" value="1"/>
</dbReference>
<dbReference type="SUPFAM" id="SSF57770">
    <property type="entry name" value="Methionyl-tRNA synthetase (MetRS), Zn-domain"/>
    <property type="match status" value="1"/>
</dbReference>
<dbReference type="SUPFAM" id="SSF50249">
    <property type="entry name" value="Nucleic acid-binding proteins"/>
    <property type="match status" value="1"/>
</dbReference>
<dbReference type="SUPFAM" id="SSF52374">
    <property type="entry name" value="Nucleotidylyl transferase"/>
    <property type="match status" value="1"/>
</dbReference>
<dbReference type="PROSITE" id="PS00178">
    <property type="entry name" value="AA_TRNA_LIGASE_I"/>
    <property type="match status" value="1"/>
</dbReference>
<dbReference type="PROSITE" id="PS50886">
    <property type="entry name" value="TRBD"/>
    <property type="match status" value="1"/>
</dbReference>
<keyword id="KW-0030">Aminoacyl-tRNA synthetase</keyword>
<keyword id="KW-0067">ATP-binding</keyword>
<keyword id="KW-0963">Cytoplasm</keyword>
<keyword id="KW-0436">Ligase</keyword>
<keyword id="KW-0479">Metal-binding</keyword>
<keyword id="KW-0547">Nucleotide-binding</keyword>
<keyword id="KW-0648">Protein biosynthesis</keyword>
<keyword id="KW-0694">RNA-binding</keyword>
<keyword id="KW-0820">tRNA-binding</keyword>
<keyword id="KW-0862">Zinc</keyword>
<evidence type="ECO:0000255" key="1">
    <source>
        <dbReference type="HAMAP-Rule" id="MF_00098"/>
    </source>
</evidence>
<gene>
    <name evidence="1" type="primary">metG</name>
    <name type="ordered locus">Maqu_0939</name>
</gene>
<comment type="function">
    <text evidence="1">Is required not only for elongation of protein synthesis but also for the initiation of all mRNA translation through initiator tRNA(fMet) aminoacylation.</text>
</comment>
<comment type="catalytic activity">
    <reaction evidence="1">
        <text>tRNA(Met) + L-methionine + ATP = L-methionyl-tRNA(Met) + AMP + diphosphate</text>
        <dbReference type="Rhea" id="RHEA:13481"/>
        <dbReference type="Rhea" id="RHEA-COMP:9667"/>
        <dbReference type="Rhea" id="RHEA-COMP:9698"/>
        <dbReference type="ChEBI" id="CHEBI:30616"/>
        <dbReference type="ChEBI" id="CHEBI:33019"/>
        <dbReference type="ChEBI" id="CHEBI:57844"/>
        <dbReference type="ChEBI" id="CHEBI:78442"/>
        <dbReference type="ChEBI" id="CHEBI:78530"/>
        <dbReference type="ChEBI" id="CHEBI:456215"/>
        <dbReference type="EC" id="6.1.1.10"/>
    </reaction>
</comment>
<comment type="cofactor">
    <cofactor evidence="1">
        <name>Zn(2+)</name>
        <dbReference type="ChEBI" id="CHEBI:29105"/>
    </cofactor>
    <text evidence="1">Binds 1 zinc ion per subunit.</text>
</comment>
<comment type="subunit">
    <text evidence="1">Homodimer.</text>
</comment>
<comment type="subcellular location">
    <subcellularLocation>
        <location evidence="1">Cytoplasm</location>
    </subcellularLocation>
</comment>
<comment type="similarity">
    <text evidence="1">Belongs to the class-I aminoacyl-tRNA synthetase family. MetG type 1 subfamily.</text>
</comment>